<organismHost>
    <name type="scientific">Myotis mystacinus</name>
    <name type="common">Whiskered bat</name>
    <dbReference type="NCBI Taxonomy" id="109479"/>
</organismHost>
<evidence type="ECO:0000250" key="1"/>
<evidence type="ECO:0000255" key="2"/>
<evidence type="ECO:0000305" key="3"/>
<reference key="1">
    <citation type="journal article" date="2003" name="Virus Res.">
        <title>Bat lyssaviruses (Aravan and Khujand) from Central Asia: phylogenetic relationships according to N, P and G gene sequences.</title>
        <authorList>
            <person name="Kuzmin I.V."/>
            <person name="Orciari L.A."/>
            <person name="Arai Y.T."/>
            <person name="Smith J.S."/>
            <person name="Hanlon C.A."/>
            <person name="Kameoka Y."/>
            <person name="Rupprecht C.E."/>
        </authorList>
    </citation>
    <scope>NUCLEOTIDE SEQUENCE [GENOMIC RNA]</scope>
</reference>
<reference key="2">
    <citation type="journal article" date="2008" name="Virus Res.">
        <title>Complete genomes of Aravan, Khujand, Irkut and West Caucasian bat viruses, with special attention to the polymerase gene and non-coding regions.</title>
        <authorList>
            <person name="Kuzmin I.V."/>
            <person name="Wu X."/>
            <person name="Tordo N."/>
            <person name="Rupprecht C.E."/>
        </authorList>
    </citation>
    <scope>NUCLEOTIDE SEQUENCE [GENOMIC RNA]</scope>
</reference>
<comment type="function">
    <text evidence="1">Plays a major role in assembly and budding of virion. Completely covers the ribonucleoprotein coil and keep it in condensed bullet-shaped form. Inhibits viral transcription and stimulates replication. Plays a major role in early induction of TRAIL-mediated apoptosis in infected neurons (By similarity).</text>
</comment>
<comment type="subunit">
    <text evidence="1">Homomultimer. Interacts with nucleoprotein and with the cytoplasmic domain of glycoprotein (By similarity).</text>
</comment>
<comment type="subcellular location">
    <subcellularLocation>
        <location>Virion membrane</location>
        <topology>Peripheral membrane protein</topology>
    </subcellularLocation>
    <subcellularLocation>
        <location evidence="1">Host endomembrane system</location>
        <topology evidence="1">Peripheral membrane protein</topology>
    </subcellularLocation>
</comment>
<comment type="domain">
    <text evidence="3">Late-budding domains (L domains) are short sequence motifs essential for viral particle budding. They recruit proteins of the host ESCRT machinery (Endosomal Sorting Complex Required for Transport) or ESCRT-associated proteins. Matrix protein contains one L domain: a PPXY motif which potentially interacts with the WW domain 3 of NEDD4 E3 ubiquitin ligase (Potential).</text>
</comment>
<comment type="miscellaneous">
    <text evidence="1">Most abundant protein in the virion.</text>
</comment>
<comment type="similarity">
    <text evidence="3">Belongs to the lyssavirus matrix protein family.</text>
</comment>
<sequence length="202" mass="23022">MNFLRKIVKSCKDEEDQKPALVSAPPDDDDLWLPPPESVPLTEISGKKNMRNFCINGEVKICSPNGYSFKILRHILKSFDGIYSGNRRMIGLVKVVIGLALSGAPVPEGMNWVYKIRRTLVFQWAESRGPLDGEELEYSQEITWDDDSEFIGLQIRVSARQCHIQGRVWCINMNSRACQLWSDMSLKTQQSDEDKNTSLLLE</sequence>
<proteinExistence type="inferred from homology"/>
<gene>
    <name type="primary">M</name>
</gene>
<feature type="chain" id="PRO_0000295571" description="Matrix protein">
    <location>
        <begin position="1"/>
        <end position="202"/>
    </location>
</feature>
<feature type="region of interest" description="Essential for glycoprotein binding" evidence="1">
    <location>
        <begin position="115"/>
        <end position="151"/>
    </location>
</feature>
<feature type="short sequence motif" description="PPXY motif" evidence="2">
    <location>
        <begin position="35"/>
        <end position="38"/>
    </location>
</feature>
<keyword id="KW-1043">Host membrane</keyword>
<keyword id="KW-0945">Host-virus interaction</keyword>
<keyword id="KW-0472">Membrane</keyword>
<keyword id="KW-0597">Phosphoprotein</keyword>
<keyword id="KW-1198">Viral budding</keyword>
<keyword id="KW-1187">Viral budding via the host ESCRT complexes</keyword>
<keyword id="KW-0261">Viral envelope protein</keyword>
<keyword id="KW-0468">Viral matrix protein</keyword>
<keyword id="KW-1188">Viral release from host cell</keyword>
<keyword id="KW-0946">Virion</keyword>
<dbReference type="EMBL" id="EF614261">
    <property type="protein sequence ID" value="AAP86778.1"/>
    <property type="molecule type" value="Genomic_RNA"/>
</dbReference>
<dbReference type="RefSeq" id="YP_009094329.1">
    <property type="nucleotide sequence ID" value="NC_025385.1"/>
</dbReference>
<dbReference type="SMR" id="Q6X1D2"/>
<dbReference type="GeneID" id="21011769"/>
<dbReference type="KEGG" id="vg:21011769"/>
<dbReference type="OrthoDB" id="9130at10239"/>
<dbReference type="Proteomes" id="UP000136780">
    <property type="component" value="Genome"/>
</dbReference>
<dbReference type="GO" id="GO:0033645">
    <property type="term" value="C:host cell endomembrane system"/>
    <property type="evidence" value="ECO:0007669"/>
    <property type="project" value="UniProtKB-SubCell"/>
</dbReference>
<dbReference type="GO" id="GO:0016020">
    <property type="term" value="C:membrane"/>
    <property type="evidence" value="ECO:0007669"/>
    <property type="project" value="UniProtKB-KW"/>
</dbReference>
<dbReference type="GO" id="GO:0019031">
    <property type="term" value="C:viral envelope"/>
    <property type="evidence" value="ECO:0007669"/>
    <property type="project" value="UniProtKB-KW"/>
</dbReference>
<dbReference type="GO" id="GO:0055036">
    <property type="term" value="C:virion membrane"/>
    <property type="evidence" value="ECO:0007669"/>
    <property type="project" value="UniProtKB-SubCell"/>
</dbReference>
<dbReference type="GO" id="GO:0039660">
    <property type="term" value="F:structural constituent of virion"/>
    <property type="evidence" value="ECO:0007669"/>
    <property type="project" value="UniProtKB-KW"/>
</dbReference>
<dbReference type="GO" id="GO:0039702">
    <property type="term" value="P:viral budding via host ESCRT complex"/>
    <property type="evidence" value="ECO:0007669"/>
    <property type="project" value="UniProtKB-KW"/>
</dbReference>
<dbReference type="Gene3D" id="3.10.460.20">
    <property type="entry name" value="Rhabdovirus matrix protein M2"/>
    <property type="match status" value="1"/>
</dbReference>
<dbReference type="InterPro" id="IPR006870">
    <property type="entry name" value="Rhabdo_M"/>
</dbReference>
<dbReference type="InterPro" id="IPR038617">
    <property type="entry name" value="Rhabdovirus_M_sf"/>
</dbReference>
<dbReference type="Pfam" id="PF04785">
    <property type="entry name" value="Rhabdo_M2"/>
    <property type="match status" value="1"/>
</dbReference>
<name>MATRX_KHUV</name>
<organism>
    <name type="scientific">Khujand virus</name>
    <name type="common">KHUV</name>
    <dbReference type="NCBI Taxonomy" id="237716"/>
    <lineage>
        <taxon>Viruses</taxon>
        <taxon>Riboviria</taxon>
        <taxon>Orthornavirae</taxon>
        <taxon>Negarnaviricota</taxon>
        <taxon>Haploviricotina</taxon>
        <taxon>Monjiviricetes</taxon>
        <taxon>Mononegavirales</taxon>
        <taxon>Rhabdoviridae</taxon>
        <taxon>Alpharhabdovirinae</taxon>
        <taxon>Lyssavirus</taxon>
    </lineage>
</organism>
<accession>Q6X1D2</accession>
<protein>
    <recommendedName>
        <fullName>Matrix protein</fullName>
    </recommendedName>
    <alternativeName>
        <fullName>Phosphoprotein M2</fullName>
    </alternativeName>
</protein>